<organism>
    <name type="scientific">Meyerozyma guilliermondii (strain ATCC 6260 / CBS 566 / DSM 6381 / JCM 1539 / NBRC 10279 / NRRL Y-324)</name>
    <name type="common">Yeast</name>
    <name type="synonym">Candida guilliermondii</name>
    <dbReference type="NCBI Taxonomy" id="294746"/>
    <lineage>
        <taxon>Eukaryota</taxon>
        <taxon>Fungi</taxon>
        <taxon>Dikarya</taxon>
        <taxon>Ascomycota</taxon>
        <taxon>Saccharomycotina</taxon>
        <taxon>Pichiomycetes</taxon>
        <taxon>Debaryomycetaceae</taxon>
        <taxon>Meyerozyma</taxon>
    </lineage>
</organism>
<sequence>MPDVHLSSSFAEGNTSEQNENDTFLSRIFGFHSIYNQLDNYQYYDPESQVGDSMIRRDGGSNHLLDSESDSDLSSIESSSSSQDQPPSIHANDIQMQPYEPPTQPYGEIDPQPQNAPIMTESAPSHGILNNGAVSTDEAQVQFRKTKTLPSFHTMYQRQARGRVFIPSRERALYLWANIVNMDEFLSDLYYYYRGRGVMNIVLGRIVDLATLVFVIGFASFLAWGVDYDKFLSRGQKSLTLSDLIIPHYISKAPAMAKLLLFGFAIYITLRIVQLYFDFRYKLSEIRNFYRQLLDIPHDDELMTISWATIVERLMELKDFNTLTSSSHYVNDLKSKVRLNAHDIANRIMRKENYIIALINKDTLNLGFEIPLLSVLNPILNTRAVLTRTLEWNLKLCIYNFVFNNQGQVNPNVLKDYNRNMLAKELSSRFKMAAIINLLLCPFIVVYFVLLYFFRYFNEYKTNPSSLIGLRQYTPWAEWKLREFNELPHFFVKRLQLSIGPANTYINQFPRGFLVVNIMTLVNFVAGAITAVLVVMGLWFEDEEHSFWAFELTENKSALFYISIFGTIWAVTAGSLATDTSSTESANSSSPFYYDPEASLRYVTQFTHYMPSTWSKKLHTAEVKGEFCELFSLKIVVIINELLSLVLTPFILWFKLSSQSGAIIDFVREYSVYVDGLGYVCYFAMFNFEKKDKNMMHDLNKKKKKSPSHRTKRDDIEEEEESDNGVPNGDDKMIKSYMYFLESYDDRERAARPTPKSRQLPRTRLPPGSISESTYNVDHILEEEELPQGKSAGVFGMINQFYKQDLGR</sequence>
<evidence type="ECO:0000250" key="1">
    <source>
        <dbReference type="UniProtKB" id="O74312"/>
    </source>
</evidence>
<evidence type="ECO:0000250" key="2">
    <source>
        <dbReference type="UniProtKB" id="Q12142"/>
    </source>
</evidence>
<evidence type="ECO:0000255" key="3"/>
<evidence type="ECO:0000256" key="4">
    <source>
        <dbReference type="SAM" id="MobiDB-lite"/>
    </source>
</evidence>
<evidence type="ECO:0000305" key="5"/>
<gene>
    <name type="primary">ATG9</name>
    <name type="ORF">PGUG_01826</name>
</gene>
<comment type="function">
    <text evidence="2">Phospholipid scramblase involved in autophagy and cytoplasm to vacuole transport (Cvt) vesicle formation. Cycles between the preautophagosomal structure/phagophore assembly site (PAS) and the cytoplasmic vesicle pool and supplies membrane for the growing autophagosome. Lipid scramblase activity plays a key role in preautophagosomal structure/phagophore assembly by distributing the phospholipids that arrive through ATG2 from the cytoplasmic to the luminal leaflet of the bilayer, thereby driving autophagosomal membrane expansion. Required for mitophagy. Also involved in endoplasmic reticulum-specific autophagic process and is essential for the survival of cells subjected to severe ER stress. Different machineries are required for anterograde trafficking to the PAS during either the Cvt pathway or bulk autophagy and for retrograde trafficking.</text>
</comment>
<comment type="catalytic activity">
    <reaction evidence="2">
        <text>a 1,2-diacyl-sn-glycero-3-phosphocholine(in) = a 1,2-diacyl-sn-glycero-3-phosphocholine(out)</text>
        <dbReference type="Rhea" id="RHEA:38571"/>
        <dbReference type="ChEBI" id="CHEBI:57643"/>
    </reaction>
</comment>
<comment type="catalytic activity">
    <reaction evidence="2">
        <text>a 1,2-diacyl-sn-glycero-3-phospho-L-serine(in) = a 1,2-diacyl-sn-glycero-3-phospho-L-serine(out)</text>
        <dbReference type="Rhea" id="RHEA:38663"/>
        <dbReference type="ChEBI" id="CHEBI:57262"/>
    </reaction>
</comment>
<comment type="catalytic activity">
    <reaction evidence="2">
        <text>a 1,2-diacyl-sn-glycero-3-phosphoethanolamine(in) = a 1,2-diacyl-sn-glycero-3-phosphoethanolamine(out)</text>
        <dbReference type="Rhea" id="RHEA:38895"/>
        <dbReference type="ChEBI" id="CHEBI:64612"/>
    </reaction>
</comment>
<comment type="catalytic activity">
    <reaction evidence="2">
        <text>a 1,2-diacyl-sn-glycero-3-phospho-(1D-myo-inositol-3-phosphate)(in) = a 1,2-diacyl-sn-glycero-3-phospho-(1D-myo-inositol-3-phosphate)(out)</text>
        <dbReference type="Rhea" id="RHEA:67920"/>
        <dbReference type="ChEBI" id="CHEBI:58088"/>
    </reaction>
</comment>
<comment type="subunit">
    <text evidence="1">Homotrimer; forms a homotrimer with a central pore that forms a path between the two membrane leaflets.</text>
</comment>
<comment type="subcellular location">
    <subcellularLocation>
        <location evidence="2">Preautophagosomal structure membrane</location>
        <topology evidence="2">Multi-pass membrane protein</topology>
    </subcellularLocation>
    <subcellularLocation>
        <location evidence="2">Cytoplasmic vesicle membrane</location>
        <topology evidence="2">Multi-pass membrane protein</topology>
    </subcellularLocation>
    <subcellularLocation>
        <location evidence="2">Golgi apparatus membrane</location>
        <topology evidence="2">Multi-pass membrane protein</topology>
    </subcellularLocation>
    <subcellularLocation>
        <location evidence="2">Endoplasmic reticulum membrane</location>
        <topology evidence="2">Multi-pass membrane protein</topology>
    </subcellularLocation>
</comment>
<comment type="domain">
    <text evidence="1">Forms a homotrimer with a solvated central pore, which is connected laterally to the cytosol through the cavity within each protomer. Acts as a lipid scramblase that uses its central pore to function: the central pore opens laterally to accommodate lipid headgroups, thereby enabling lipid flipping and redistribution of lipids added to the outer leaflet of ATG9-containing vesicles, thereby enabling growth into autophagosomes.</text>
</comment>
<comment type="PTM">
    <text evidence="2">Phosphorylated by ATG1. ATG1 phosphorylation is required for preautophagosome elongation.</text>
</comment>
<comment type="similarity">
    <text evidence="5">Belongs to the ATG9 family.</text>
</comment>
<dbReference type="EMBL" id="CH408156">
    <property type="protein sequence ID" value="EDK37728.2"/>
    <property type="molecule type" value="Genomic_DNA"/>
</dbReference>
<dbReference type="RefSeq" id="XP_001486155.1">
    <property type="nucleotide sequence ID" value="XM_001486105.1"/>
</dbReference>
<dbReference type="SMR" id="A5DEX5"/>
<dbReference type="FunCoup" id="A5DEX5">
    <property type="interactions" value="232"/>
</dbReference>
<dbReference type="STRING" id="294746.A5DEX5"/>
<dbReference type="GeneID" id="5127568"/>
<dbReference type="KEGG" id="pgu:PGUG_01826"/>
<dbReference type="VEuPathDB" id="FungiDB:PGUG_01826"/>
<dbReference type="eggNOG" id="KOG2173">
    <property type="taxonomic scope" value="Eukaryota"/>
</dbReference>
<dbReference type="HOGENOM" id="CLU_006200_1_0_1"/>
<dbReference type="InParanoid" id="A5DEX5"/>
<dbReference type="OMA" id="ELMTISW"/>
<dbReference type="OrthoDB" id="2020634at2759"/>
<dbReference type="Proteomes" id="UP000001997">
    <property type="component" value="Unassembled WGS sequence"/>
</dbReference>
<dbReference type="GO" id="GO:0005776">
    <property type="term" value="C:autophagosome"/>
    <property type="evidence" value="ECO:0007669"/>
    <property type="project" value="TreeGrafter"/>
</dbReference>
<dbReference type="GO" id="GO:0030659">
    <property type="term" value="C:cytoplasmic vesicle membrane"/>
    <property type="evidence" value="ECO:0007669"/>
    <property type="project" value="UniProtKB-SubCell"/>
</dbReference>
<dbReference type="GO" id="GO:0005789">
    <property type="term" value="C:endoplasmic reticulum membrane"/>
    <property type="evidence" value="ECO:0007669"/>
    <property type="project" value="UniProtKB-SubCell"/>
</dbReference>
<dbReference type="GO" id="GO:0000139">
    <property type="term" value="C:Golgi membrane"/>
    <property type="evidence" value="ECO:0007669"/>
    <property type="project" value="UniProtKB-SubCell"/>
</dbReference>
<dbReference type="GO" id="GO:0034045">
    <property type="term" value="C:phagophore assembly site membrane"/>
    <property type="evidence" value="ECO:0007669"/>
    <property type="project" value="UniProtKB-SubCell"/>
</dbReference>
<dbReference type="GO" id="GO:0000422">
    <property type="term" value="P:autophagy of mitochondrion"/>
    <property type="evidence" value="ECO:0007669"/>
    <property type="project" value="TreeGrafter"/>
</dbReference>
<dbReference type="GO" id="GO:0006869">
    <property type="term" value="P:lipid transport"/>
    <property type="evidence" value="ECO:0007669"/>
    <property type="project" value="UniProtKB-KW"/>
</dbReference>
<dbReference type="GO" id="GO:0034727">
    <property type="term" value="P:piecemeal microautophagy of the nucleus"/>
    <property type="evidence" value="ECO:0007669"/>
    <property type="project" value="TreeGrafter"/>
</dbReference>
<dbReference type="GO" id="GO:0034497">
    <property type="term" value="P:protein localization to phagophore assembly site"/>
    <property type="evidence" value="ECO:0007669"/>
    <property type="project" value="TreeGrafter"/>
</dbReference>
<dbReference type="GO" id="GO:0061709">
    <property type="term" value="P:reticulophagy"/>
    <property type="evidence" value="ECO:0007669"/>
    <property type="project" value="TreeGrafter"/>
</dbReference>
<dbReference type="InterPro" id="IPR007241">
    <property type="entry name" value="Autophagy-rel_prot_9"/>
</dbReference>
<dbReference type="PANTHER" id="PTHR13038">
    <property type="entry name" value="APG9 AUTOPHAGY 9"/>
    <property type="match status" value="1"/>
</dbReference>
<dbReference type="PANTHER" id="PTHR13038:SF10">
    <property type="entry name" value="AUTOPHAGY-RELATED PROTEIN 9"/>
    <property type="match status" value="1"/>
</dbReference>
<dbReference type="Pfam" id="PF04109">
    <property type="entry name" value="ATG9"/>
    <property type="match status" value="1"/>
</dbReference>
<name>ATG9_PICGU</name>
<keyword id="KW-0072">Autophagy</keyword>
<keyword id="KW-0968">Cytoplasmic vesicle</keyword>
<keyword id="KW-0256">Endoplasmic reticulum</keyword>
<keyword id="KW-0333">Golgi apparatus</keyword>
<keyword id="KW-0445">Lipid transport</keyword>
<keyword id="KW-0472">Membrane</keyword>
<keyword id="KW-0597">Phosphoprotein</keyword>
<keyword id="KW-1185">Reference proteome</keyword>
<keyword id="KW-0812">Transmembrane</keyword>
<keyword id="KW-1133">Transmembrane helix</keyword>
<keyword id="KW-0813">Transport</keyword>
<protein>
    <recommendedName>
        <fullName>Autophagy-related protein 9</fullName>
    </recommendedName>
</protein>
<accession>A5DEX5</accession>
<feature type="chain" id="PRO_0000317914" description="Autophagy-related protein 9">
    <location>
        <begin position="1"/>
        <end position="808"/>
    </location>
</feature>
<feature type="topological domain" description="Cytoplasmic" evidence="5">
    <location>
        <begin position="1"/>
        <end position="205"/>
    </location>
</feature>
<feature type="transmembrane region" description="Helical" evidence="3">
    <location>
        <begin position="206"/>
        <end position="226"/>
    </location>
</feature>
<feature type="topological domain" description="Lumenal" evidence="5">
    <location>
        <begin position="227"/>
        <end position="258"/>
    </location>
</feature>
<feature type="transmembrane region" description="Helical" evidence="3">
    <location>
        <begin position="259"/>
        <end position="279"/>
    </location>
</feature>
<feature type="topological domain" description="Cytoplasmic" evidence="5">
    <location>
        <begin position="280"/>
        <end position="433"/>
    </location>
</feature>
<feature type="intramembrane region" evidence="1">
    <location>
        <begin position="434"/>
        <end position="454"/>
    </location>
</feature>
<feature type="topological domain" description="Cytoplasmic" evidence="5">
    <location>
        <begin position="455"/>
        <end position="517"/>
    </location>
</feature>
<feature type="transmembrane region" description="Helical" evidence="3">
    <location>
        <begin position="518"/>
        <end position="538"/>
    </location>
</feature>
<feature type="topological domain" description="Lumenal" evidence="5">
    <location>
        <begin position="539"/>
        <end position="557"/>
    </location>
</feature>
<feature type="transmembrane region" description="Helical" evidence="3">
    <location>
        <begin position="558"/>
        <end position="578"/>
    </location>
</feature>
<feature type="topological domain" description="Cytoplasmic" evidence="5">
    <location>
        <begin position="579"/>
        <end position="633"/>
    </location>
</feature>
<feature type="intramembrane region" evidence="1">
    <location>
        <begin position="634"/>
        <end position="654"/>
    </location>
</feature>
<feature type="topological domain" description="Cytoplasmic" evidence="5">
    <location>
        <begin position="655"/>
        <end position="808"/>
    </location>
</feature>
<feature type="region of interest" description="Disordered" evidence="4">
    <location>
        <begin position="51"/>
        <end position="116"/>
    </location>
</feature>
<feature type="region of interest" description="Disordered" evidence="4">
    <location>
        <begin position="698"/>
        <end position="732"/>
    </location>
</feature>
<feature type="region of interest" description="Disordered" evidence="4">
    <location>
        <begin position="748"/>
        <end position="771"/>
    </location>
</feature>
<feature type="compositionally biased region" description="Low complexity" evidence="4">
    <location>
        <begin position="72"/>
        <end position="89"/>
    </location>
</feature>
<feature type="compositionally biased region" description="Basic residues" evidence="4">
    <location>
        <begin position="700"/>
        <end position="711"/>
    </location>
</feature>
<reference key="1">
    <citation type="journal article" date="2009" name="Nature">
        <title>Evolution of pathogenicity and sexual reproduction in eight Candida genomes.</title>
        <authorList>
            <person name="Butler G."/>
            <person name="Rasmussen M.D."/>
            <person name="Lin M.F."/>
            <person name="Santos M.A.S."/>
            <person name="Sakthikumar S."/>
            <person name="Munro C.A."/>
            <person name="Rheinbay E."/>
            <person name="Grabherr M."/>
            <person name="Forche A."/>
            <person name="Reedy J.L."/>
            <person name="Agrafioti I."/>
            <person name="Arnaud M.B."/>
            <person name="Bates S."/>
            <person name="Brown A.J.P."/>
            <person name="Brunke S."/>
            <person name="Costanzo M.C."/>
            <person name="Fitzpatrick D.A."/>
            <person name="de Groot P.W.J."/>
            <person name="Harris D."/>
            <person name="Hoyer L.L."/>
            <person name="Hube B."/>
            <person name="Klis F.M."/>
            <person name="Kodira C."/>
            <person name="Lennard N."/>
            <person name="Logue M.E."/>
            <person name="Martin R."/>
            <person name="Neiman A.M."/>
            <person name="Nikolaou E."/>
            <person name="Quail M.A."/>
            <person name="Quinn J."/>
            <person name="Santos M.C."/>
            <person name="Schmitzberger F.F."/>
            <person name="Sherlock G."/>
            <person name="Shah P."/>
            <person name="Silverstein K.A.T."/>
            <person name="Skrzypek M.S."/>
            <person name="Soll D."/>
            <person name="Staggs R."/>
            <person name="Stansfield I."/>
            <person name="Stumpf M.P.H."/>
            <person name="Sudbery P.E."/>
            <person name="Srikantha T."/>
            <person name="Zeng Q."/>
            <person name="Berman J."/>
            <person name="Berriman M."/>
            <person name="Heitman J."/>
            <person name="Gow N.A.R."/>
            <person name="Lorenz M.C."/>
            <person name="Birren B.W."/>
            <person name="Kellis M."/>
            <person name="Cuomo C.A."/>
        </authorList>
    </citation>
    <scope>NUCLEOTIDE SEQUENCE [LARGE SCALE GENOMIC DNA]</scope>
    <source>
        <strain>ATCC 6260 / CBS 566 / DSM 6381 / JCM 1539 / NBRC 10279 / NRRL Y-324</strain>
    </source>
</reference>
<proteinExistence type="inferred from homology"/>